<dbReference type="EC" id="3.1.3.-" evidence="5"/>
<dbReference type="EC" id="3.1.3.8" evidence="5"/>
<dbReference type="EMBL" id="U60412">
    <property type="protein sequence ID" value="AAB58465.1"/>
    <property type="molecule type" value="Genomic_DNA"/>
</dbReference>
<dbReference type="SMR" id="O00100"/>
<dbReference type="GlyCosmos" id="O00100">
    <property type="glycosylation" value="8 sites, No reported glycans"/>
</dbReference>
<dbReference type="VEuPathDB" id="FungiDB:ATEG_05333"/>
<dbReference type="GO" id="GO:0005576">
    <property type="term" value="C:extracellular region"/>
    <property type="evidence" value="ECO:0007669"/>
    <property type="project" value="UniProtKB-SubCell"/>
</dbReference>
<dbReference type="GO" id="GO:0016158">
    <property type="term" value="F:3-phytase activity"/>
    <property type="evidence" value="ECO:0007669"/>
    <property type="project" value="UniProtKB-EC"/>
</dbReference>
<dbReference type="GO" id="GO:0003993">
    <property type="term" value="F:acid phosphatase activity"/>
    <property type="evidence" value="ECO:0007669"/>
    <property type="project" value="TreeGrafter"/>
</dbReference>
<dbReference type="CDD" id="cd07061">
    <property type="entry name" value="HP_HAP_like"/>
    <property type="match status" value="1"/>
</dbReference>
<dbReference type="FunFam" id="3.40.50.1240:FF:000027">
    <property type="entry name" value="3-phytase A"/>
    <property type="match status" value="1"/>
</dbReference>
<dbReference type="Gene3D" id="3.40.50.1240">
    <property type="entry name" value="Phosphoglycerate mutase-like"/>
    <property type="match status" value="1"/>
</dbReference>
<dbReference type="InterPro" id="IPR033379">
    <property type="entry name" value="Acid_Pase_AS"/>
</dbReference>
<dbReference type="InterPro" id="IPR000560">
    <property type="entry name" value="His_Pase_clade-2"/>
</dbReference>
<dbReference type="InterPro" id="IPR029033">
    <property type="entry name" value="His_PPase_superfam"/>
</dbReference>
<dbReference type="InterPro" id="IPR016274">
    <property type="entry name" value="Histidine_acid_Pase_euk"/>
</dbReference>
<dbReference type="PANTHER" id="PTHR20963:SF24">
    <property type="entry name" value="3-PHYTASE B"/>
    <property type="match status" value="1"/>
</dbReference>
<dbReference type="PANTHER" id="PTHR20963">
    <property type="entry name" value="MULTIPLE INOSITOL POLYPHOSPHATE PHOSPHATASE-RELATED"/>
    <property type="match status" value="1"/>
</dbReference>
<dbReference type="Pfam" id="PF00328">
    <property type="entry name" value="His_Phos_2"/>
    <property type="match status" value="1"/>
</dbReference>
<dbReference type="PIRSF" id="PIRSF000894">
    <property type="entry name" value="Acid_phosphatase"/>
    <property type="match status" value="1"/>
</dbReference>
<dbReference type="SUPFAM" id="SSF53254">
    <property type="entry name" value="Phosphoglycerate mutase-like"/>
    <property type="match status" value="1"/>
</dbReference>
<dbReference type="PROSITE" id="PS00616">
    <property type="entry name" value="HIS_ACID_PHOSPHAT_1"/>
    <property type="match status" value="1"/>
</dbReference>
<dbReference type="PROSITE" id="PS00778">
    <property type="entry name" value="HIS_ACID_PHOSPHAT_2"/>
    <property type="match status" value="1"/>
</dbReference>
<reference key="1">
    <citation type="submission" date="1996-06" db="EMBL/GenBank/DDBJ databases">
        <title>Cloning of the phytases of Aspergillus nidulans and Talaromyces thermophilus and their evolutionary relation to other histidine acid phosphatases.</title>
        <authorList>
            <person name="Pasamontes L."/>
            <person name="Haiker M."/>
            <person name="Henriquez Huecas M."/>
            <person name="Hug D."/>
            <person name="Mitchell D.B."/>
            <person name="Broger C."/>
            <person name="van Loon A.P."/>
        </authorList>
    </citation>
    <scope>NUCLEOTIDE SEQUENCE [GENOMIC DNA]</scope>
    <source>
        <strain>ATCC 10020 / NRRL 1960 / CBS 116.46 / IFO 6123 / DSM 826 / IMI 44243</strain>
    </source>
</reference>
<reference key="2">
    <citation type="journal article" date="1999" name="Appl. Environ. Microbiol.">
        <title>Biophysical characterization of fungal phytases (myo-inositol hexakisphosphate phosphohydrolases): molecular size, glycosylation pattern, and engineering of proteolytic resistance.</title>
        <authorList>
            <person name="Wyss M."/>
            <person name="Pasamontes L."/>
            <person name="Friedlein A."/>
            <person name="Remy R."/>
            <person name="Tessier M."/>
            <person name="Kronenberger A."/>
            <person name="Middendorf A."/>
            <person name="Lehmann M."/>
            <person name="Schnoebelen L."/>
            <person name="Roethlisberger U."/>
            <person name="Kusznir E."/>
            <person name="Wahl G."/>
            <person name="Mueller F."/>
            <person name="Lahm H.-W."/>
            <person name="Vogel K."/>
            <person name="van Loon A.P.G.M."/>
        </authorList>
    </citation>
    <scope>PROTEIN SEQUENCE OF 20-35</scope>
    <scope>SUBUNIT</scope>
    <source>
        <strain>ATCC 10020 / NRRL 1960 / CBS 116.46 / IFO 6123 / DSM 826 / IMI 44243</strain>
    </source>
</reference>
<reference key="3">
    <citation type="journal article" date="1999" name="Appl. Environ. Microbiol.">
        <title>Biochemical characterization of fungal phytases (myo-inositol hexakisphosphate phosphohydrolases): catalytic properties.</title>
        <authorList>
            <person name="Wyss M."/>
            <person name="Brugger R."/>
            <person name="Kronenberger A."/>
            <person name="Remy R."/>
            <person name="Fimbel R."/>
            <person name="Oesterhelt G."/>
            <person name="Lehmann M."/>
            <person name="van Loon A.P.G.M."/>
        </authorList>
    </citation>
    <scope>FUNCTION</scope>
    <scope>CATALYTIC ACTIVITY</scope>
    <scope>BIOPHYSICOCHEMICAL PROPERTIES</scope>
</reference>
<sequence length="466" mass="51055">MGVFVVLLSIATLFGSTSGTALGPRGNHSDCTSVDRGYQCFPELSHKWGLYAPYFSLQDESPFPLDVPDDCHITFVQVLARHGARSPTDSKTKAYAATIAAIQKNATALPGKYAFLKSYNYSMGSENLNPFGRNQLQDLGAQFYRRYDTLTRHINPFVRAADSSRVHESAEKFVEGFQNARQGDPHANPHQPSPRVDVVIPEGTAYNNTLEHSICTAFEASTVGDAAADNFTAVFAPAIAKRLEADLPGVQLSADDVVNLMAMCPFETVSLTDDAHTLSPFCDLFTAAEWTQYNYLLSLDKYYGYGGGNPLGPVQGVGWANELIARLTRSPVHDHTCVNNTLDANPATFPLNATLYADFSHDSNLVSIFWALGLYNGTKPLSQTTVEDITRTDGYAAAWTVPFAARAYIEMMQCRAEKQPLVRVLVNDRVMPLHGCAVDNLGRCKRDDFVEGLSFARAGGNWAECF</sequence>
<feature type="signal peptide" evidence="4">
    <location>
        <begin position="1"/>
        <end position="19"/>
    </location>
</feature>
<feature type="chain" id="PRO_0000283712" description="Phytase A">
    <location>
        <begin position="20"/>
        <end position="466"/>
    </location>
</feature>
<feature type="active site" description="Nucleophile" evidence="1">
    <location>
        <position position="82"/>
    </location>
</feature>
<feature type="binding site" evidence="2">
    <location>
        <position position="51"/>
    </location>
    <ligand>
        <name>1D-myo-inositol hexakisphosphate</name>
        <dbReference type="ChEBI" id="CHEBI:58130"/>
    </ligand>
</feature>
<feature type="binding site" evidence="2">
    <location>
        <position position="81"/>
    </location>
    <ligand>
        <name>1D-myo-inositol hexakisphosphate</name>
        <dbReference type="ChEBI" id="CHEBI:58130"/>
    </ligand>
</feature>
<feature type="binding site" evidence="2">
    <location>
        <position position="82"/>
    </location>
    <ligand>
        <name>1D-myo-inositol hexakisphosphate</name>
        <dbReference type="ChEBI" id="CHEBI:58130"/>
    </ligand>
</feature>
<feature type="binding site" evidence="2">
    <location>
        <position position="85"/>
    </location>
    <ligand>
        <name>1D-myo-inositol hexakisphosphate</name>
        <dbReference type="ChEBI" id="CHEBI:58130"/>
    </ligand>
</feature>
<feature type="binding site" evidence="2">
    <location>
        <position position="88"/>
    </location>
    <ligand>
        <name>1D-myo-inositol hexakisphosphate</name>
        <dbReference type="ChEBI" id="CHEBI:58130"/>
    </ligand>
</feature>
<feature type="binding site" evidence="2">
    <location>
        <position position="165"/>
    </location>
    <ligand>
        <name>1D-myo-inositol hexakisphosphate</name>
        <dbReference type="ChEBI" id="CHEBI:58130"/>
    </ligand>
</feature>
<feature type="binding site" evidence="2">
    <location>
        <position position="301"/>
    </location>
    <ligand>
        <name>1D-myo-inositol hexakisphosphate</name>
        <dbReference type="ChEBI" id="CHEBI:58130"/>
    </ligand>
</feature>
<feature type="binding site" evidence="2">
    <location>
        <position position="361"/>
    </location>
    <ligand>
        <name>1D-myo-inositol hexakisphosphate</name>
        <dbReference type="ChEBI" id="CHEBI:58130"/>
    </ligand>
</feature>
<feature type="binding site" evidence="2">
    <location>
        <position position="362"/>
    </location>
    <ligand>
        <name>1D-myo-inositol hexakisphosphate</name>
        <dbReference type="ChEBI" id="CHEBI:58130"/>
    </ligand>
</feature>
<feature type="glycosylation site" description="N-linked (GlcNAc...) asparagine" evidence="3">
    <location>
        <position position="27"/>
    </location>
</feature>
<feature type="glycosylation site" description="N-linked (GlcNAc...) asparagine" evidence="3">
    <location>
        <position position="105"/>
    </location>
</feature>
<feature type="glycosylation site" description="N-linked (GlcNAc...) asparagine" evidence="3">
    <location>
        <position position="120"/>
    </location>
</feature>
<feature type="glycosylation site" description="N-linked (GlcNAc...) asparagine" evidence="3">
    <location>
        <position position="207"/>
    </location>
</feature>
<feature type="glycosylation site" description="N-linked (GlcNAc...) asparagine" evidence="3">
    <location>
        <position position="230"/>
    </location>
</feature>
<feature type="glycosylation site" description="N-linked (GlcNAc...) asparagine" evidence="3">
    <location>
        <position position="339"/>
    </location>
</feature>
<feature type="glycosylation site" description="N-linked (GlcNAc...) asparagine" evidence="3">
    <location>
        <position position="352"/>
    </location>
</feature>
<feature type="glycosylation site" description="N-linked (GlcNAc...) asparagine" evidence="3">
    <location>
        <position position="376"/>
    </location>
</feature>
<feature type="disulfide bond" evidence="1">
    <location>
        <begin position="31"/>
        <end position="40"/>
    </location>
</feature>
<feature type="disulfide bond" evidence="1">
    <location>
        <begin position="71"/>
        <end position="414"/>
    </location>
</feature>
<feature type="disulfide bond" evidence="1">
    <location>
        <begin position="215"/>
        <end position="465"/>
    </location>
</feature>
<feature type="disulfide bond" evidence="1">
    <location>
        <begin position="264"/>
        <end position="282"/>
    </location>
</feature>
<feature type="disulfide bond" evidence="1">
    <location>
        <begin position="436"/>
        <end position="444"/>
    </location>
</feature>
<gene>
    <name evidence="8" type="primary">phyA</name>
</gene>
<protein>
    <recommendedName>
        <fullName evidence="6">Phytase A</fullName>
        <ecNumber evidence="5">3.1.3.-</ecNumber>
        <ecNumber evidence="5">3.1.3.8</ecNumber>
    </recommendedName>
    <alternativeName>
        <fullName evidence="7">Histidine acid phosphatase phyA</fullName>
        <shortName evidence="7">HAP</shortName>
    </alternativeName>
    <alternativeName>
        <fullName evidence="7">Myo-inositol hexakisphosphate phosphohydrolase A</fullName>
    </alternativeName>
    <alternativeName>
        <fullName evidence="7">Myo-inositol-hexaphosphate 3-phosphohydrolase A</fullName>
    </alternativeName>
</protein>
<name>PHYA2_ASPTE</name>
<comment type="function">
    <text evidence="5">Catalyzes the phosphate monoester hydrolysis of phytic acid (myo-inositol hexakisphosphate), which results in the stepwise formation of myo-inositol pentakis-, tetrakis-, tris-, bis-, and monophosphates, as well as the liberation of inorganic phosphate (PubMed:9925555). Myo-inositol 2-monophosphate is the end product (PubMed:9925555). Has a broad substrate specificity and is also able to dephosphorylate other classic acid phosphatase substrates such as p-nitrophenyl phosphate, phenyl phosphate, fructose 1,6-bisphosphate, glucose 6-phosphate, 3-phosphoglycerate, as well as ADP and ATP (PubMed:9925555).</text>
</comment>
<comment type="catalytic activity">
    <reaction evidence="5">
        <text>1D-myo-inositol hexakisphosphate + H2O = 1D-myo-inositol 1,2,4,5,6-pentakisphosphate + phosphate</text>
        <dbReference type="Rhea" id="RHEA:16989"/>
        <dbReference type="ChEBI" id="CHEBI:15377"/>
        <dbReference type="ChEBI" id="CHEBI:43474"/>
        <dbReference type="ChEBI" id="CHEBI:57798"/>
        <dbReference type="ChEBI" id="CHEBI:58130"/>
        <dbReference type="EC" id="3.1.3.8"/>
    </reaction>
    <physiologicalReaction direction="left-to-right" evidence="5">
        <dbReference type="Rhea" id="RHEA:16990"/>
    </physiologicalReaction>
</comment>
<comment type="catalytic activity">
    <reaction evidence="5">
        <text>1D-myo-inositol 1,2,4,5,6-pentakisphosphate + H2O = 1D-myo-inositol 1,2,5,6-tetrakisphosphate + phosphate</text>
        <dbReference type="Rhea" id="RHEA:77115"/>
        <dbReference type="ChEBI" id="CHEBI:15377"/>
        <dbReference type="ChEBI" id="CHEBI:43474"/>
        <dbReference type="ChEBI" id="CHEBI:57798"/>
        <dbReference type="ChEBI" id="CHEBI:195535"/>
    </reaction>
    <physiologicalReaction direction="left-to-right" evidence="5">
        <dbReference type="Rhea" id="RHEA:77116"/>
    </physiologicalReaction>
</comment>
<comment type="catalytic activity">
    <reaction evidence="5">
        <text>1D-myo-inositol 1,2,5,6-tetrakisphosphate + H2O = 1D-myo-inositol 1,2,6-trisphosphate + phosphate</text>
        <dbReference type="Rhea" id="RHEA:77119"/>
        <dbReference type="ChEBI" id="CHEBI:15377"/>
        <dbReference type="ChEBI" id="CHEBI:43474"/>
        <dbReference type="ChEBI" id="CHEBI:195535"/>
        <dbReference type="ChEBI" id="CHEBI:195537"/>
    </reaction>
    <physiologicalReaction direction="left-to-right" evidence="5">
        <dbReference type="Rhea" id="RHEA:77120"/>
    </physiologicalReaction>
</comment>
<comment type="catalytic activity">
    <reaction evidence="5">
        <text>1D-myo-inositol 1,2,6-trisphosphate + H2O = 1D-myo-inositol 1,2-bisphosphate + phosphate</text>
        <dbReference type="Rhea" id="RHEA:77131"/>
        <dbReference type="ChEBI" id="CHEBI:15377"/>
        <dbReference type="ChEBI" id="CHEBI:43474"/>
        <dbReference type="ChEBI" id="CHEBI:195537"/>
        <dbReference type="ChEBI" id="CHEBI:195539"/>
    </reaction>
    <physiologicalReaction direction="left-to-right" evidence="5">
        <dbReference type="Rhea" id="RHEA:77132"/>
    </physiologicalReaction>
</comment>
<comment type="catalytic activity">
    <reaction evidence="5">
        <text>1D-myo-inositol 1,2-bisphosphate + H2O = 1D-myo-inositol 2-phosphate + phosphate</text>
        <dbReference type="Rhea" id="RHEA:77135"/>
        <dbReference type="ChEBI" id="CHEBI:15377"/>
        <dbReference type="ChEBI" id="CHEBI:43474"/>
        <dbReference type="ChEBI" id="CHEBI:84142"/>
        <dbReference type="ChEBI" id="CHEBI:195539"/>
    </reaction>
    <physiologicalReaction direction="left-to-right" evidence="5">
        <dbReference type="Rhea" id="RHEA:77136"/>
    </physiologicalReaction>
</comment>
<comment type="biophysicochemical properties">
    <kinetics>
        <KM evidence="5">23.2 uM for phytate</KM>
    </kinetics>
    <phDependence>
        <text evidence="5">Optimum pH is 5.5. Active from 4 to 6.5.</text>
    </phDependence>
</comment>
<comment type="subunit">
    <text evidence="4">Monomer.</text>
</comment>
<comment type="subcellular location">
    <subcellularLocation>
        <location evidence="9">Secreted</location>
    </subcellularLocation>
</comment>
<comment type="similarity">
    <text evidence="9">Belongs to the histidine acid phosphatase family.</text>
</comment>
<organism>
    <name type="scientific">Aspergillus terreus</name>
    <dbReference type="NCBI Taxonomy" id="33178"/>
    <lineage>
        <taxon>Eukaryota</taxon>
        <taxon>Fungi</taxon>
        <taxon>Dikarya</taxon>
        <taxon>Ascomycota</taxon>
        <taxon>Pezizomycotina</taxon>
        <taxon>Eurotiomycetes</taxon>
        <taxon>Eurotiomycetidae</taxon>
        <taxon>Eurotiales</taxon>
        <taxon>Aspergillaceae</taxon>
        <taxon>Aspergillus</taxon>
        <taxon>Aspergillus subgen. Circumdati</taxon>
    </lineage>
</organism>
<evidence type="ECO:0000250" key="1">
    <source>
        <dbReference type="UniProtKB" id="O00092"/>
    </source>
</evidence>
<evidence type="ECO:0000250" key="2">
    <source>
        <dbReference type="UniProtKB" id="P34752"/>
    </source>
</evidence>
<evidence type="ECO:0000255" key="3"/>
<evidence type="ECO:0000269" key="4">
    <source>
    </source>
</evidence>
<evidence type="ECO:0000269" key="5">
    <source>
    </source>
</evidence>
<evidence type="ECO:0000303" key="6">
    <source>
    </source>
</evidence>
<evidence type="ECO:0000303" key="7">
    <source>
    </source>
</evidence>
<evidence type="ECO:0000303" key="8">
    <source ref="1"/>
</evidence>
<evidence type="ECO:0000305" key="9"/>
<accession>O00100</accession>
<keyword id="KW-0903">Direct protein sequencing</keyword>
<keyword id="KW-1015">Disulfide bond</keyword>
<keyword id="KW-0325">Glycoprotein</keyword>
<keyword id="KW-0378">Hydrolase</keyword>
<keyword id="KW-0964">Secreted</keyword>
<keyword id="KW-0732">Signal</keyword>
<proteinExistence type="evidence at protein level"/>